<organism>
    <name type="scientific">Apiospora sacchari</name>
    <name type="common">Arthrinium sacchari</name>
    <dbReference type="NCBI Taxonomy" id="166626"/>
    <lineage>
        <taxon>Eukaryota</taxon>
        <taxon>Fungi</taxon>
        <taxon>Dikarya</taxon>
        <taxon>Ascomycota</taxon>
        <taxon>Pezizomycotina</taxon>
        <taxon>Sordariomycetes</taxon>
        <taxon>Xylariomycetidae</taxon>
        <taxon>Amphisphaeriales</taxon>
        <taxon>Apiosporaceae</taxon>
        <taxon>Apiospora</taxon>
    </lineage>
</organism>
<proteinExistence type="evidence at protein level"/>
<comment type="function">
    <text evidence="4">FAD-dependent monooxygenase; part of the gene cluster that mediates the biosynthesis of the diterpenoid pyrones subglutinols A and B (PubMed:32286350). The first step of the pathway is the synthesis of the alpha-pyrone moiety by the polyketide synthase dpasA via condensation of one acetyl-CoA starter unit with 3 malonyl-CoA units and 2 methylations (PubMed:32286350). The alpha-pyrone is then combined with geranylgeranyl pyrophosphate (GGPP) formed by the GGPP synthase dpasD through the action of the prenyltransferase dpasC to yield a linear alpha-pyrone diterpenoid (PubMed:32286350). Subsequent steps in the diterpenoid pyrone biosynthetic pathway involve the decalin core formation, which is initiated by the epoxidation of the C10-C11 olefin by the FAD-dependent oxidoreductase dpasE, and is followed by a cyclization cascade catalyzed by the terpene cyclase dpasB (PubMed:32286350). The FAD-linked oxidoreductase dpasF is then involved in tetrahydrofuran (THF) ring formation at the C5 unit to complete the formation of subglutinols A and B (PubMed:32286350). DpasF possesses also an additional catalytic ability of multi-step oxidations to generate a new DDP analog with an enone system at the C5 named FDDP A (PubMed:32286350).</text>
</comment>
<comment type="cofactor">
    <cofactor evidence="6">
        <name>FAD</name>
        <dbReference type="ChEBI" id="CHEBI:57692"/>
    </cofactor>
</comment>
<comment type="pathway">
    <text evidence="4">Secondary metabolite biosynthesis; terpenoid biosynthesis.</text>
</comment>
<comment type="subcellular location">
    <subcellularLocation>
        <location evidence="2">Membrane</location>
        <topology evidence="2">Single-pass membrane protein</topology>
    </subcellularLocation>
</comment>
<comment type="biotechnology">
    <text evidence="4">Diterpenoid pyrones display various biological activities and subglutinol A shows insecticidal and anti-HIV activities.</text>
</comment>
<comment type="similarity">
    <text evidence="6">Belongs to the paxM FAD-dependent monooxygenase family.</text>
</comment>
<keyword id="KW-0274">FAD</keyword>
<keyword id="KW-0285">Flavoprotein</keyword>
<keyword id="KW-0325">Glycoprotein</keyword>
<keyword id="KW-0472">Membrane</keyword>
<keyword id="KW-0503">Monooxygenase</keyword>
<keyword id="KW-0560">Oxidoreductase</keyword>
<keyword id="KW-0732">Signal</keyword>
<keyword id="KW-0812">Transmembrane</keyword>
<keyword id="KW-1133">Transmembrane helix</keyword>
<accession>P9WEX4</accession>
<evidence type="ECO:0000250" key="1">
    <source>
        <dbReference type="UniProtKB" id="B8M9J8"/>
    </source>
</evidence>
<evidence type="ECO:0000255" key="2"/>
<evidence type="ECO:0000255" key="3">
    <source>
        <dbReference type="PROSITE-ProRule" id="PRU00498"/>
    </source>
</evidence>
<evidence type="ECO:0000269" key="4">
    <source>
    </source>
</evidence>
<evidence type="ECO:0000303" key="5">
    <source>
    </source>
</evidence>
<evidence type="ECO:0000305" key="6"/>
<sequence>MSQPAFKIIIVGCSVTGLTLAHCLDKLGVEYTILEKRSAVVLQEGASVAVMPNGGRILDQLGLYDAFEKATVPLDLTDAYLPDQDFRFTSDYPRRVLATFGYPVAFMERRGLLEILYDGIADKSKIHLNKGVTHVEQNDDGAKVHTEDGEVYEGDIVVGADGIHSKTLREMWRMMGEPVVNGIAQSESQNMSVAFSCVFGISHDVPELQPGEQILRMCNGSTIFVMGSKGVVFWFIVTQLNRRYEYHDAPRYTTEEAAAFCEARKDAEIKEGVTFECIWRKQHVFNMLPLQESLFQTWSHGRVVCIGDSVHKMTINLGQGANCAIEDVTVLCNMLRAFLAEKREKKPSYSEIDTLLRRFNKEHLPRASTIVETSRLTTRVHAQVGISQRIMTRWVVPYFGKFLQGKPLGLIASGPVLDFLPLKRASYPGWERYRVKKSSRGAGFWITAFLSLSLLAVAATMYGWGNSQIWADWNIL</sequence>
<feature type="signal peptide" evidence="2">
    <location>
        <begin position="1"/>
        <end position="21"/>
    </location>
</feature>
<feature type="chain" id="PRO_0000451542" description="FAD-dependent monooxygenase dpasE">
    <location>
        <begin position="22"/>
        <end position="476"/>
    </location>
</feature>
<feature type="transmembrane region" description="Helical" evidence="2">
    <location>
        <begin position="441"/>
        <end position="461"/>
    </location>
</feature>
<feature type="binding site" evidence="1">
    <location>
        <position position="35"/>
    </location>
    <ligand>
        <name>FAD</name>
        <dbReference type="ChEBI" id="CHEBI:57692"/>
    </ligand>
</feature>
<feature type="binding site" evidence="1">
    <location>
        <position position="49"/>
    </location>
    <ligand>
        <name>FAD</name>
        <dbReference type="ChEBI" id="CHEBI:57692"/>
    </ligand>
</feature>
<feature type="binding site" evidence="1">
    <location>
        <position position="109"/>
    </location>
    <ligand>
        <name>FAD</name>
        <dbReference type="ChEBI" id="CHEBI:57692"/>
    </ligand>
</feature>
<feature type="binding site" evidence="1">
    <location>
        <position position="308"/>
    </location>
    <ligand>
        <name>FAD</name>
        <dbReference type="ChEBI" id="CHEBI:57692"/>
    </ligand>
</feature>
<feature type="binding site" evidence="1">
    <location>
        <position position="321"/>
    </location>
    <ligand>
        <name>FAD</name>
        <dbReference type="ChEBI" id="CHEBI:57692"/>
    </ligand>
</feature>
<feature type="glycosylation site" description="N-linked (GlcNAc...) asparagine" evidence="3">
    <location>
        <position position="190"/>
    </location>
</feature>
<feature type="glycosylation site" description="N-linked (GlcNAc...) asparagine" evidence="3">
    <location>
        <position position="219"/>
    </location>
</feature>
<protein>
    <recommendedName>
        <fullName evidence="5">FAD-dependent monooxygenase dpasE</fullName>
        <ecNumber evidence="4">1.-.-.-</ecNumber>
    </recommendedName>
    <alternativeName>
        <fullName evidence="5">Diterpenoid pyrone biosynthesis cluster protein E</fullName>
    </alternativeName>
</protein>
<gene>
    <name evidence="5" type="primary">dpasE</name>
</gene>
<dbReference type="EC" id="1.-.-.-" evidence="4"/>
<dbReference type="SMR" id="P9WEX4"/>
<dbReference type="GlyCosmos" id="P9WEX4">
    <property type="glycosylation" value="2 sites, No reported glycans"/>
</dbReference>
<dbReference type="UniPathway" id="UPA00213"/>
<dbReference type="GO" id="GO:0016020">
    <property type="term" value="C:membrane"/>
    <property type="evidence" value="ECO:0007669"/>
    <property type="project" value="UniProtKB-SubCell"/>
</dbReference>
<dbReference type="GO" id="GO:0071949">
    <property type="term" value="F:FAD binding"/>
    <property type="evidence" value="ECO:0007669"/>
    <property type="project" value="InterPro"/>
</dbReference>
<dbReference type="GO" id="GO:0004497">
    <property type="term" value="F:monooxygenase activity"/>
    <property type="evidence" value="ECO:0007669"/>
    <property type="project" value="UniProtKB-KW"/>
</dbReference>
<dbReference type="GO" id="GO:0016114">
    <property type="term" value="P:terpenoid biosynthetic process"/>
    <property type="evidence" value="ECO:0007669"/>
    <property type="project" value="UniProtKB-UniPathway"/>
</dbReference>
<dbReference type="Gene3D" id="3.50.50.60">
    <property type="entry name" value="FAD/NAD(P)-binding domain"/>
    <property type="match status" value="1"/>
</dbReference>
<dbReference type="InterPro" id="IPR002938">
    <property type="entry name" value="FAD-bd"/>
</dbReference>
<dbReference type="InterPro" id="IPR036188">
    <property type="entry name" value="FAD/NAD-bd_sf"/>
</dbReference>
<dbReference type="InterPro" id="IPR050562">
    <property type="entry name" value="FAD_mOase_fung"/>
</dbReference>
<dbReference type="PANTHER" id="PTHR47356:SF2">
    <property type="entry name" value="FAD-BINDING DOMAIN-CONTAINING PROTEIN-RELATED"/>
    <property type="match status" value="1"/>
</dbReference>
<dbReference type="PANTHER" id="PTHR47356">
    <property type="entry name" value="FAD-DEPENDENT MONOOXYGENASE ASQG-RELATED"/>
    <property type="match status" value="1"/>
</dbReference>
<dbReference type="Pfam" id="PF01494">
    <property type="entry name" value="FAD_binding_3"/>
    <property type="match status" value="1"/>
</dbReference>
<dbReference type="PRINTS" id="PR00420">
    <property type="entry name" value="RNGMNOXGNASE"/>
</dbReference>
<dbReference type="SUPFAM" id="SSF51905">
    <property type="entry name" value="FAD/NAD(P)-binding domain"/>
    <property type="match status" value="1"/>
</dbReference>
<reference key="1">
    <citation type="journal article" date="2020" name="Nat. Commun.">
        <title>Synthetic biology based construction of biological activity-related library of fungal decalin-containing diterpenoid pyrones.</title>
        <authorList>
            <person name="Tsukada K."/>
            <person name="Shinki S."/>
            <person name="Kaneko A."/>
            <person name="Murakami K."/>
            <person name="Irie K."/>
            <person name="Murai M."/>
            <person name="Miyoshi H."/>
            <person name="Dan S."/>
            <person name="Kawaji K."/>
            <person name="Hayashi H."/>
            <person name="Kodama E.N."/>
            <person name="Hori A."/>
            <person name="Salim E."/>
            <person name="Kuraishi T."/>
            <person name="Hirata N."/>
            <person name="Kanda Y."/>
            <person name="Asai T."/>
        </authorList>
    </citation>
    <scope>NUCLEOTIDE SEQUENCE [GENOMIC DNA]</scope>
    <scope>FUNCTION</scope>
    <scope>CATALYTIC ACTIVITY</scope>
    <scope>PATHWAY</scope>
    <scope>BIOTECHNOLOGY</scope>
</reference>
<name>DPASE_APISA</name>